<organism>
    <name type="scientific">Rickettsia prowazekii (strain Madrid E)</name>
    <dbReference type="NCBI Taxonomy" id="272947"/>
    <lineage>
        <taxon>Bacteria</taxon>
        <taxon>Pseudomonadati</taxon>
        <taxon>Pseudomonadota</taxon>
        <taxon>Alphaproteobacteria</taxon>
        <taxon>Rickettsiales</taxon>
        <taxon>Rickettsiaceae</taxon>
        <taxon>Rickettsieae</taxon>
        <taxon>Rickettsia</taxon>
        <taxon>typhus group</taxon>
    </lineage>
</organism>
<name>RS11_RICPR</name>
<protein>
    <recommendedName>
        <fullName evidence="1">Small ribosomal subunit protein uS11</fullName>
    </recommendedName>
    <alternativeName>
        <fullName evidence="2">30S ribosomal protein S11</fullName>
    </alternativeName>
</protein>
<evidence type="ECO:0000255" key="1">
    <source>
        <dbReference type="HAMAP-Rule" id="MF_01310"/>
    </source>
</evidence>
<evidence type="ECO:0000305" key="2"/>
<reference key="1">
    <citation type="journal article" date="1998" name="Nature">
        <title>The genome sequence of Rickettsia prowazekii and the origin of mitochondria.</title>
        <authorList>
            <person name="Andersson S.G.E."/>
            <person name="Zomorodipour A."/>
            <person name="Andersson J.O."/>
            <person name="Sicheritz-Ponten T."/>
            <person name="Alsmark U.C.M."/>
            <person name="Podowski R.M."/>
            <person name="Naeslund A.K."/>
            <person name="Eriksson A.-S."/>
            <person name="Winkler H.H."/>
            <person name="Kurland C.G."/>
        </authorList>
    </citation>
    <scope>NUCLEOTIDE SEQUENCE [LARGE SCALE GENOMIC DNA]</scope>
    <source>
        <strain>Madrid E</strain>
    </source>
</reference>
<accession>Q9ZCS8</accession>
<keyword id="KW-1185">Reference proteome</keyword>
<keyword id="KW-0687">Ribonucleoprotein</keyword>
<keyword id="KW-0689">Ribosomal protein</keyword>
<keyword id="KW-0694">RNA-binding</keyword>
<keyword id="KW-0699">rRNA-binding</keyword>
<proteinExistence type="inferred from homology"/>
<sequence>MNQTIKVKKKKKTITLGVVHIRASFNNTIVTFTDIQGNTISSASAGGNGFKGARKATPYAAQVTIDKASEKAKECGLKTISIRIGGPGAQRESAMRALFGQNFVVTSILDVSSIAHNGVRPPKRRRV</sequence>
<feature type="chain" id="PRO_0000123210" description="Small ribosomal subunit protein uS11">
    <location>
        <begin position="1"/>
        <end position="127"/>
    </location>
</feature>
<gene>
    <name evidence="1" type="primary">rpsK</name>
    <name type="ordered locus">RP636</name>
</gene>
<dbReference type="EMBL" id="AJ235272">
    <property type="protein sequence ID" value="CAA15076.1"/>
    <property type="molecule type" value="Genomic_DNA"/>
</dbReference>
<dbReference type="PIR" id="B71669">
    <property type="entry name" value="B71669"/>
</dbReference>
<dbReference type="RefSeq" id="NP_221000.1">
    <property type="nucleotide sequence ID" value="NC_000963.1"/>
</dbReference>
<dbReference type="RefSeq" id="WP_004596242.1">
    <property type="nucleotide sequence ID" value="NC_000963.1"/>
</dbReference>
<dbReference type="SMR" id="Q9ZCS8"/>
<dbReference type="STRING" id="272947.gene:17555713"/>
<dbReference type="EnsemblBacteria" id="CAA15076">
    <property type="protein sequence ID" value="CAA15076"/>
    <property type="gene ID" value="CAA15076"/>
</dbReference>
<dbReference type="GeneID" id="57569761"/>
<dbReference type="KEGG" id="rpr:RP636"/>
<dbReference type="PATRIC" id="fig|272947.5.peg.658"/>
<dbReference type="eggNOG" id="COG0100">
    <property type="taxonomic scope" value="Bacteria"/>
</dbReference>
<dbReference type="HOGENOM" id="CLU_072439_5_0_5"/>
<dbReference type="OrthoDB" id="9806415at2"/>
<dbReference type="Proteomes" id="UP000002480">
    <property type="component" value="Chromosome"/>
</dbReference>
<dbReference type="GO" id="GO:1990904">
    <property type="term" value="C:ribonucleoprotein complex"/>
    <property type="evidence" value="ECO:0007669"/>
    <property type="project" value="UniProtKB-KW"/>
</dbReference>
<dbReference type="GO" id="GO:0005840">
    <property type="term" value="C:ribosome"/>
    <property type="evidence" value="ECO:0007669"/>
    <property type="project" value="UniProtKB-KW"/>
</dbReference>
<dbReference type="GO" id="GO:0019843">
    <property type="term" value="F:rRNA binding"/>
    <property type="evidence" value="ECO:0007669"/>
    <property type="project" value="UniProtKB-UniRule"/>
</dbReference>
<dbReference type="GO" id="GO:0003735">
    <property type="term" value="F:structural constituent of ribosome"/>
    <property type="evidence" value="ECO:0007669"/>
    <property type="project" value="InterPro"/>
</dbReference>
<dbReference type="GO" id="GO:0006412">
    <property type="term" value="P:translation"/>
    <property type="evidence" value="ECO:0007669"/>
    <property type="project" value="UniProtKB-UniRule"/>
</dbReference>
<dbReference type="Gene3D" id="3.30.420.80">
    <property type="entry name" value="Ribosomal protein S11"/>
    <property type="match status" value="1"/>
</dbReference>
<dbReference type="HAMAP" id="MF_01310">
    <property type="entry name" value="Ribosomal_uS11"/>
    <property type="match status" value="1"/>
</dbReference>
<dbReference type="InterPro" id="IPR001971">
    <property type="entry name" value="Ribosomal_uS11"/>
</dbReference>
<dbReference type="InterPro" id="IPR019981">
    <property type="entry name" value="Ribosomal_uS11_bac-type"/>
</dbReference>
<dbReference type="InterPro" id="IPR018102">
    <property type="entry name" value="Ribosomal_uS11_CS"/>
</dbReference>
<dbReference type="InterPro" id="IPR036967">
    <property type="entry name" value="Ribosomal_uS11_sf"/>
</dbReference>
<dbReference type="NCBIfam" id="NF003698">
    <property type="entry name" value="PRK05309.1"/>
    <property type="match status" value="1"/>
</dbReference>
<dbReference type="NCBIfam" id="TIGR03632">
    <property type="entry name" value="uS11_bact"/>
    <property type="match status" value="1"/>
</dbReference>
<dbReference type="PANTHER" id="PTHR11759">
    <property type="entry name" value="40S RIBOSOMAL PROTEIN S14/30S RIBOSOMAL PROTEIN S11"/>
    <property type="match status" value="1"/>
</dbReference>
<dbReference type="Pfam" id="PF00411">
    <property type="entry name" value="Ribosomal_S11"/>
    <property type="match status" value="1"/>
</dbReference>
<dbReference type="PIRSF" id="PIRSF002131">
    <property type="entry name" value="Ribosomal_S11"/>
    <property type="match status" value="1"/>
</dbReference>
<dbReference type="SUPFAM" id="SSF53137">
    <property type="entry name" value="Translational machinery components"/>
    <property type="match status" value="1"/>
</dbReference>
<dbReference type="PROSITE" id="PS00054">
    <property type="entry name" value="RIBOSOMAL_S11"/>
    <property type="match status" value="1"/>
</dbReference>
<comment type="function">
    <text evidence="1">Located on the platform of the 30S subunit, it bridges several disparate RNA helices of the 16S rRNA. Forms part of the Shine-Dalgarno cleft in the 70S ribosome.</text>
</comment>
<comment type="subunit">
    <text evidence="1">Part of the 30S ribosomal subunit. Interacts with proteins S7 and S18. Binds to IF-3.</text>
</comment>
<comment type="similarity">
    <text evidence="1">Belongs to the universal ribosomal protein uS11 family.</text>
</comment>